<protein>
    <recommendedName>
        <fullName evidence="1">Prokaryotic ubiquitin-like protein Pup</fullName>
    </recommendedName>
    <alternativeName>
        <fullName evidence="1">Bacterial ubiquitin-like modifier</fullName>
    </alternativeName>
</protein>
<gene>
    <name evidence="1" type="primary">pup</name>
    <name type="ordered locus">Tfu_1791</name>
</gene>
<accession>Q47NZ3</accession>
<reference key="1">
    <citation type="journal article" date="2007" name="J. Bacteriol.">
        <title>Genome sequence and analysis of the soil cellulolytic actinomycete Thermobifida fusca YX.</title>
        <authorList>
            <person name="Lykidis A."/>
            <person name="Mavromatis K."/>
            <person name="Ivanova N."/>
            <person name="Anderson I."/>
            <person name="Land M."/>
            <person name="DiBartolo G."/>
            <person name="Martinez M."/>
            <person name="Lapidus A."/>
            <person name="Lucas S."/>
            <person name="Copeland A."/>
            <person name="Richardson P."/>
            <person name="Wilson D.B."/>
            <person name="Kyrpides N."/>
        </authorList>
    </citation>
    <scope>NUCLEOTIDE SEQUENCE [LARGE SCALE GENOMIC DNA]</scope>
    <source>
        <strain>YX</strain>
    </source>
</reference>
<dbReference type="EMBL" id="CP000088">
    <property type="protein sequence ID" value="AAZ55826.1"/>
    <property type="molecule type" value="Genomic_DNA"/>
</dbReference>
<dbReference type="RefSeq" id="WP_011292217.1">
    <property type="nucleotide sequence ID" value="NC_007333.1"/>
</dbReference>
<dbReference type="SMR" id="Q47NZ3"/>
<dbReference type="STRING" id="269800.Tfu_1791"/>
<dbReference type="KEGG" id="tfu:Tfu_1791"/>
<dbReference type="eggNOG" id="ENOG50333JS">
    <property type="taxonomic scope" value="Bacteria"/>
</dbReference>
<dbReference type="HOGENOM" id="CLU_183816_2_0_11"/>
<dbReference type="UniPathway" id="UPA00997"/>
<dbReference type="GO" id="GO:0070628">
    <property type="term" value="F:proteasome binding"/>
    <property type="evidence" value="ECO:0007669"/>
    <property type="project" value="UniProtKB-UniRule"/>
</dbReference>
<dbReference type="GO" id="GO:0031386">
    <property type="term" value="F:protein tag activity"/>
    <property type="evidence" value="ECO:0007669"/>
    <property type="project" value="UniProtKB-UniRule"/>
</dbReference>
<dbReference type="GO" id="GO:0019941">
    <property type="term" value="P:modification-dependent protein catabolic process"/>
    <property type="evidence" value="ECO:0007669"/>
    <property type="project" value="UniProtKB-UniRule"/>
</dbReference>
<dbReference type="GO" id="GO:0010498">
    <property type="term" value="P:proteasomal protein catabolic process"/>
    <property type="evidence" value="ECO:0007669"/>
    <property type="project" value="UniProtKB-UniRule"/>
</dbReference>
<dbReference type="GO" id="GO:0070490">
    <property type="term" value="P:protein pupylation"/>
    <property type="evidence" value="ECO:0007669"/>
    <property type="project" value="UniProtKB-UniRule"/>
</dbReference>
<dbReference type="HAMAP" id="MF_02106">
    <property type="entry name" value="Pup"/>
    <property type="match status" value="1"/>
</dbReference>
<dbReference type="InterPro" id="IPR008515">
    <property type="entry name" value="Ubiquitin-like_Pup"/>
</dbReference>
<dbReference type="NCBIfam" id="TIGR03687">
    <property type="entry name" value="pupylate_cterm"/>
    <property type="match status" value="1"/>
</dbReference>
<dbReference type="Pfam" id="PF05639">
    <property type="entry name" value="Pup"/>
    <property type="match status" value="1"/>
</dbReference>
<feature type="chain" id="PRO_0000390616" description="Prokaryotic ubiquitin-like protein Pup">
    <location>
        <begin position="1"/>
        <end position="67"/>
    </location>
</feature>
<feature type="region of interest" description="Disordered" evidence="2">
    <location>
        <begin position="1"/>
        <end position="26"/>
    </location>
</feature>
<feature type="region of interest" description="ARC ATPase binding" evidence="1">
    <location>
        <begin position="23"/>
        <end position="61"/>
    </location>
</feature>
<feature type="coiled-coil region" evidence="1">
    <location>
        <begin position="27"/>
        <end position="55"/>
    </location>
</feature>
<feature type="cross-link" description="Isoglutamyl lysine isopeptide (Glu-Lys) (interchain with K-? in acceptor proteins)" evidence="1">
    <location>
        <position position="67"/>
    </location>
</feature>
<evidence type="ECO:0000255" key="1">
    <source>
        <dbReference type="HAMAP-Rule" id="MF_02106"/>
    </source>
</evidence>
<evidence type="ECO:0000256" key="2">
    <source>
        <dbReference type="SAM" id="MobiDB-lite"/>
    </source>
</evidence>
<organism>
    <name type="scientific">Thermobifida fusca (strain YX)</name>
    <dbReference type="NCBI Taxonomy" id="269800"/>
    <lineage>
        <taxon>Bacteria</taxon>
        <taxon>Bacillati</taxon>
        <taxon>Actinomycetota</taxon>
        <taxon>Actinomycetes</taxon>
        <taxon>Streptosporangiales</taxon>
        <taxon>Nocardiopsidaceae</taxon>
        <taxon>Thermobifida</taxon>
    </lineage>
</organism>
<name>PUP_THEFY</name>
<proteinExistence type="inferred from homology"/>
<comment type="function">
    <text evidence="1">Protein modifier that is covalently attached to lysine residues of substrate proteins, thereby targeting them for proteasomal degradation. The tagging system is termed pupylation.</text>
</comment>
<comment type="pathway">
    <text evidence="1">Protein degradation; proteasomal Pup-dependent pathway.</text>
</comment>
<comment type="subunit">
    <text evidence="1">Strongly interacts with the proteasome-associated ATPase ARC through a hydrophobic interface; the interacting region of Pup lies in its C-terminal half. There is one Pup binding site per ARC hexamer ring.</text>
</comment>
<comment type="domain">
    <text evidence="1">The N-terminal unstructured half of Pup provides a signal required to initiate unfolding and degradation by the proteasome but is not needed for pupylation, while the C-terminal helical half of Pup interacts with ARC to target proteins to the proteasome.</text>
</comment>
<comment type="similarity">
    <text evidence="1">Belongs to the prokaryotic ubiquitin-like protein family.</text>
</comment>
<keyword id="KW-0175">Coiled coil</keyword>
<keyword id="KW-1017">Isopeptide bond</keyword>
<keyword id="KW-0833">Ubl conjugation pathway</keyword>
<sequence>MATKETGGQKHATRRNQEVEEIEVTTETSVRNEKLAEDVDDILDEIDEVLESNAEDFVRQFVQKGGE</sequence>